<feature type="signal peptide" evidence="2">
    <location>
        <begin position="1"/>
        <end position="20"/>
    </location>
</feature>
<feature type="chain" id="PRO_0000318513" description="Immunoglobulin superfamily member 1">
    <location>
        <begin position="21"/>
        <end position="1317"/>
    </location>
</feature>
<feature type="topological domain" description="Extracellular" evidence="2">
    <location>
        <begin position="21"/>
        <end position="499"/>
    </location>
</feature>
<feature type="transmembrane region" description="Helical" evidence="2">
    <location>
        <begin position="500"/>
        <end position="520"/>
    </location>
</feature>
<feature type="topological domain" description="Cytoplasmic" evidence="2">
    <location>
        <begin position="521"/>
        <end position="531"/>
    </location>
</feature>
<feature type="transmembrane region" description="Helical" evidence="2">
    <location>
        <begin position="532"/>
        <end position="552"/>
    </location>
</feature>
<feature type="topological domain" description="Extracellular" evidence="2">
    <location>
        <begin position="553"/>
        <end position="1317"/>
    </location>
</feature>
<feature type="domain" description="Ig-like C2-type 1">
    <location>
        <begin position="21"/>
        <end position="112"/>
    </location>
</feature>
<feature type="domain" description="Ig-like C2-type 2">
    <location>
        <begin position="114"/>
        <end position="211"/>
    </location>
</feature>
<feature type="domain" description="Ig-like C2-type 3">
    <location>
        <begin position="216"/>
        <end position="302"/>
    </location>
</feature>
<feature type="domain" description="Ig-like C2-type 4">
    <location>
        <begin position="311"/>
        <end position="398"/>
    </location>
</feature>
<feature type="domain" description="Ig-like C2-type 5">
    <location>
        <begin position="400"/>
        <end position="481"/>
    </location>
</feature>
<feature type="domain" description="Ig-like C2-type 6">
    <location>
        <begin position="570"/>
        <end position="658"/>
    </location>
</feature>
<feature type="domain" description="Ig-like C2-type 7">
    <location>
        <begin position="659"/>
        <end position="753"/>
    </location>
</feature>
<feature type="domain" description="Ig-like C2-type 8">
    <location>
        <begin position="758"/>
        <end position="850"/>
    </location>
</feature>
<feature type="domain" description="Ig-like C2-type 9">
    <location>
        <begin position="854"/>
        <end position="938"/>
    </location>
</feature>
<feature type="domain" description="Ig-like C2-type 10">
    <location>
        <begin position="946"/>
        <end position="1041"/>
    </location>
</feature>
<feature type="domain" description="Ig-like C2-type 11">
    <location>
        <begin position="1046"/>
        <end position="1131"/>
    </location>
</feature>
<feature type="domain" description="Ig-like C2-type 12">
    <location>
        <begin position="1142"/>
        <end position="1223"/>
    </location>
</feature>
<feature type="region of interest" description="Disordered" evidence="4">
    <location>
        <begin position="1290"/>
        <end position="1310"/>
    </location>
</feature>
<feature type="compositionally biased region" description="Polar residues" evidence="4">
    <location>
        <begin position="1296"/>
        <end position="1309"/>
    </location>
</feature>
<feature type="glycosylation site" description="N-linked (GlcNAc...) asparagine" evidence="2">
    <location>
        <position position="43"/>
    </location>
</feature>
<feature type="glycosylation site" description="N-linked (GlcNAc...) asparagine" evidence="2">
    <location>
        <position position="328"/>
    </location>
</feature>
<feature type="glycosylation site" description="N-linked (GlcNAc...) asparagine" evidence="2">
    <location>
        <position position="371"/>
    </location>
</feature>
<feature type="glycosylation site" description="N-linked (GlcNAc...) asparagine" evidence="2">
    <location>
        <position position="871"/>
    </location>
</feature>
<feature type="glycosylation site" description="N-linked (GlcNAc...) asparagine" evidence="2">
    <location>
        <position position="967"/>
    </location>
</feature>
<feature type="glycosylation site" description="N-linked (GlcNAc...) asparagine" evidence="2">
    <location>
        <position position="1063"/>
    </location>
</feature>
<feature type="disulfide bond" evidence="3">
    <location>
        <begin position="48"/>
        <end position="96"/>
    </location>
</feature>
<feature type="disulfide bond" evidence="3">
    <location>
        <begin position="238"/>
        <end position="286"/>
    </location>
</feature>
<feature type="disulfide bond" evidence="3">
    <location>
        <begin position="333"/>
        <end position="382"/>
    </location>
</feature>
<feature type="disulfide bond" evidence="3">
    <location>
        <begin position="422"/>
        <end position="465"/>
    </location>
</feature>
<feature type="disulfide bond" evidence="3">
    <location>
        <begin position="780"/>
        <end position="830"/>
    </location>
</feature>
<feature type="disulfide bond" evidence="3">
    <location>
        <begin position="876"/>
        <end position="923"/>
    </location>
</feature>
<feature type="disulfide bond" evidence="3">
    <location>
        <begin position="1068"/>
        <end position="1115"/>
    </location>
</feature>
<feature type="disulfide bond" evidence="3">
    <location>
        <begin position="1164"/>
        <end position="1207"/>
    </location>
</feature>
<feature type="splice variant" id="VSP_031198" description="In isoform 5." evidence="7">
    <location>
        <begin position="1"/>
        <end position="542"/>
    </location>
</feature>
<feature type="splice variant" id="VSP_031199" description="In isoform 4." evidence="7 9">
    <original>LYPKPTLTAHPGPILAPGE</original>
    <variation>GCGHGCWHLTIVIPGIMAG</variation>
    <location>
        <begin position="214"/>
        <end position="232"/>
    </location>
</feature>
<feature type="splice variant" id="VSP_031200" description="In isoform 4." evidence="7 9">
    <location>
        <begin position="233"/>
        <end position="1317"/>
    </location>
</feature>
<feature type="splice variant" id="VSP_031201" description="In isoform 3." evidence="7">
    <original>EMYPKPFF</original>
    <variation>DGRTKAQN</variation>
    <location>
        <begin position="755"/>
        <end position="762"/>
    </location>
</feature>
<feature type="splice variant" id="VSP_031202" description="In isoform 3." evidence="7">
    <location>
        <begin position="763"/>
        <end position="1317"/>
    </location>
</feature>
<feature type="splice variant" id="VSP_031203" description="In isoform 2." evidence="8">
    <location>
        <begin position="865"/>
        <end position="1156"/>
    </location>
</feature>
<feature type="sequence conflict" description="In Ref. 1; AAP57081." evidence="10" ref="1">
    <original>K</original>
    <variation>E</variation>
    <location>
        <position position="277"/>
    </location>
</feature>
<dbReference type="EMBL" id="AY227771">
    <property type="protein sequence ID" value="AAP57079.1"/>
    <property type="molecule type" value="mRNA"/>
</dbReference>
<dbReference type="EMBL" id="AY227772">
    <property type="protein sequence ID" value="AAP57080.1"/>
    <property type="molecule type" value="mRNA"/>
</dbReference>
<dbReference type="EMBL" id="AY227773">
    <property type="protein sequence ID" value="AAP57081.1"/>
    <property type="molecule type" value="mRNA"/>
</dbReference>
<dbReference type="EMBL" id="AY227774">
    <property type="protein sequence ID" value="AAP57082.1"/>
    <property type="molecule type" value="mRNA"/>
</dbReference>
<dbReference type="EMBL" id="AK129126">
    <property type="protein sequence ID" value="BAC97936.1"/>
    <property type="status" value="ALT_INIT"/>
    <property type="molecule type" value="mRNA"/>
</dbReference>
<dbReference type="EMBL" id="AK030452">
    <property type="protein sequence ID" value="BAC26969.1"/>
    <property type="molecule type" value="mRNA"/>
</dbReference>
<dbReference type="CCDS" id="CCDS40964.1">
    <molecule id="Q7TQA1-1"/>
</dbReference>
<dbReference type="CCDS" id="CCDS40965.1">
    <molecule id="Q7TQA1-5"/>
</dbReference>
<dbReference type="CCDS" id="CCDS40966.1">
    <molecule id="Q7TQA1-3"/>
</dbReference>
<dbReference type="CCDS" id="CCDS40967.1">
    <molecule id="Q7TQA1-4"/>
</dbReference>
<dbReference type="RefSeq" id="NP_808259.2">
    <molecule id="Q7TQA1-1"/>
    <property type="nucleotide sequence ID" value="NM_177591.4"/>
</dbReference>
<dbReference type="RefSeq" id="NP_808583.1">
    <molecule id="Q7TQA1-4"/>
    <property type="nucleotide sequence ID" value="NM_177915.4"/>
</dbReference>
<dbReference type="RefSeq" id="NP_899178.2">
    <molecule id="Q7TQA1-3"/>
    <property type="nucleotide sequence ID" value="NM_183335.2"/>
</dbReference>
<dbReference type="RefSeq" id="NP_899179.1">
    <molecule id="Q7TQA1-5"/>
    <property type="nucleotide sequence ID" value="NM_183336.2"/>
</dbReference>
<dbReference type="RefSeq" id="XP_006541550.1">
    <molecule id="Q7TQA1-3"/>
    <property type="nucleotide sequence ID" value="XM_006541487.3"/>
</dbReference>
<dbReference type="SMR" id="Q7TQA1"/>
<dbReference type="FunCoup" id="Q7TQA1">
    <property type="interactions" value="622"/>
</dbReference>
<dbReference type="STRING" id="10090.ENSMUSP00000033442"/>
<dbReference type="GlyConnect" id="2381">
    <property type="glycosylation" value="1 N-Linked glycan (3 sites)"/>
</dbReference>
<dbReference type="GlyCosmos" id="Q7TQA1">
    <property type="glycosylation" value="8 sites, 1 glycan"/>
</dbReference>
<dbReference type="GlyGen" id="Q7TQA1">
    <property type="glycosylation" value="13 sites, 7 N-linked glycans (7 sites), 1 O-linked glycan (1 site)"/>
</dbReference>
<dbReference type="iPTMnet" id="Q7TQA1"/>
<dbReference type="PhosphoSitePlus" id="Q7TQA1"/>
<dbReference type="PaxDb" id="10090-ENSMUSP00000033442"/>
<dbReference type="ProteomicsDB" id="267297">
    <molecule id="Q7TQA1-1"/>
</dbReference>
<dbReference type="ProteomicsDB" id="267298">
    <molecule id="Q7TQA1-2"/>
</dbReference>
<dbReference type="ProteomicsDB" id="267299">
    <molecule id="Q7TQA1-3"/>
</dbReference>
<dbReference type="ProteomicsDB" id="267301">
    <molecule id="Q7TQA1-5"/>
</dbReference>
<dbReference type="Antibodypedia" id="16308">
    <property type="antibodies" value="186 antibodies from 19 providers"/>
</dbReference>
<dbReference type="DNASU" id="209268"/>
<dbReference type="Ensembl" id="ENSMUST00000033442.14">
    <molecule id="Q7TQA1-1"/>
    <property type="protein sequence ID" value="ENSMUSP00000033442.8"/>
    <property type="gene ID" value="ENSMUSG00000031111.17"/>
</dbReference>
<dbReference type="Ensembl" id="ENSMUST00000072037.13">
    <molecule id="Q7TQA1-3"/>
    <property type="protein sequence ID" value="ENSMUSP00000071919.7"/>
    <property type="gene ID" value="ENSMUSG00000031111.17"/>
</dbReference>
<dbReference type="Ensembl" id="ENSMUST00000114891.2">
    <molecule id="Q7TQA1-4"/>
    <property type="protein sequence ID" value="ENSMUSP00000110541.2"/>
    <property type="gene ID" value="ENSMUSG00000031111.17"/>
</dbReference>
<dbReference type="Ensembl" id="ENSMUST00000114893.8">
    <molecule id="Q7TQA1-5"/>
    <property type="protein sequence ID" value="ENSMUSP00000110543.2"/>
    <property type="gene ID" value="ENSMUSG00000031111.17"/>
</dbReference>
<dbReference type="GeneID" id="209268"/>
<dbReference type="KEGG" id="mmu:209268"/>
<dbReference type="UCSC" id="uc009tdg.2">
    <molecule id="Q7TQA1-1"/>
    <property type="organism name" value="mouse"/>
</dbReference>
<dbReference type="UCSC" id="uc009tdi.1">
    <molecule id="Q7TQA1-3"/>
    <property type="organism name" value="mouse"/>
</dbReference>
<dbReference type="UCSC" id="uc009tdj.2">
    <molecule id="Q7TQA1-4"/>
    <property type="organism name" value="mouse"/>
</dbReference>
<dbReference type="AGR" id="MGI:2147913"/>
<dbReference type="CTD" id="3547"/>
<dbReference type="MGI" id="MGI:2147913">
    <property type="gene designation" value="Igsf1"/>
</dbReference>
<dbReference type="VEuPathDB" id="HostDB:ENSMUSG00000031111"/>
<dbReference type="eggNOG" id="ENOG502RYEX">
    <property type="taxonomic scope" value="Eukaryota"/>
</dbReference>
<dbReference type="GeneTree" id="ENSGT01130000278334"/>
<dbReference type="HOGENOM" id="CLU_006143_0_0_1"/>
<dbReference type="InParanoid" id="Q7TQA1"/>
<dbReference type="OMA" id="GCGHGCW"/>
<dbReference type="OrthoDB" id="9824921at2759"/>
<dbReference type="PhylomeDB" id="Q7TQA1"/>
<dbReference type="TreeFam" id="TF336644"/>
<dbReference type="BioGRID-ORCS" id="209268">
    <property type="hits" value="0 hits in 78 CRISPR screens"/>
</dbReference>
<dbReference type="ChiTaRS" id="Igsf1">
    <property type="organism name" value="mouse"/>
</dbReference>
<dbReference type="PRO" id="PR:Q7TQA1"/>
<dbReference type="Proteomes" id="UP000000589">
    <property type="component" value="Chromosome X"/>
</dbReference>
<dbReference type="RNAct" id="Q7TQA1">
    <property type="molecule type" value="protein"/>
</dbReference>
<dbReference type="Bgee" id="ENSMUSG00000031111">
    <property type="expression patterns" value="Expressed in arcuate nucleus of hypothalamus and 133 other cell types or tissues"/>
</dbReference>
<dbReference type="GO" id="GO:0005576">
    <property type="term" value="C:extracellular region"/>
    <property type="evidence" value="ECO:0007669"/>
    <property type="project" value="UniProtKB-SubCell"/>
</dbReference>
<dbReference type="GO" id="GO:0016020">
    <property type="term" value="C:membrane"/>
    <property type="evidence" value="ECO:0007669"/>
    <property type="project" value="UniProtKB-SubCell"/>
</dbReference>
<dbReference type="GO" id="GO:0038102">
    <property type="term" value="F:activin receptor antagonist activity"/>
    <property type="evidence" value="ECO:0007669"/>
    <property type="project" value="Ensembl"/>
</dbReference>
<dbReference type="GO" id="GO:0034711">
    <property type="term" value="F:inhibin binding"/>
    <property type="evidence" value="ECO:0007669"/>
    <property type="project" value="Ensembl"/>
</dbReference>
<dbReference type="GO" id="GO:0006355">
    <property type="term" value="P:regulation of DNA-templated transcription"/>
    <property type="evidence" value="ECO:0007669"/>
    <property type="project" value="Ensembl"/>
</dbReference>
<dbReference type="FunFam" id="2.60.40.10:FF:000033">
    <property type="entry name" value="Killer cell immunoglobulin-like receptor"/>
    <property type="match status" value="12"/>
</dbReference>
<dbReference type="Gene3D" id="2.60.40.10">
    <property type="entry name" value="Immunoglobulins"/>
    <property type="match status" value="12"/>
</dbReference>
<dbReference type="InterPro" id="IPR007110">
    <property type="entry name" value="Ig-like_dom"/>
</dbReference>
<dbReference type="InterPro" id="IPR036179">
    <property type="entry name" value="Ig-like_dom_sf"/>
</dbReference>
<dbReference type="InterPro" id="IPR013783">
    <property type="entry name" value="Ig-like_fold"/>
</dbReference>
<dbReference type="InterPro" id="IPR050412">
    <property type="entry name" value="Ig-like_Receptors_ImmuneReg"/>
</dbReference>
<dbReference type="InterPro" id="IPR003599">
    <property type="entry name" value="Ig_sub"/>
</dbReference>
<dbReference type="InterPro" id="IPR003598">
    <property type="entry name" value="Ig_sub2"/>
</dbReference>
<dbReference type="PANTHER" id="PTHR11738">
    <property type="entry name" value="MHC CLASS I NK CELL RECEPTOR"/>
    <property type="match status" value="1"/>
</dbReference>
<dbReference type="PANTHER" id="PTHR11738:SF186">
    <property type="entry name" value="OSTEOCLAST-ASSOCIATED IMMUNOGLOBULIN-LIKE RECEPTOR"/>
    <property type="match status" value="1"/>
</dbReference>
<dbReference type="Pfam" id="PF13895">
    <property type="entry name" value="Ig_2"/>
    <property type="match status" value="4"/>
</dbReference>
<dbReference type="Pfam" id="PF13927">
    <property type="entry name" value="Ig_3"/>
    <property type="match status" value="1"/>
</dbReference>
<dbReference type="SMART" id="SM00409">
    <property type="entry name" value="IG"/>
    <property type="match status" value="11"/>
</dbReference>
<dbReference type="SMART" id="SM00408">
    <property type="entry name" value="IGc2"/>
    <property type="match status" value="6"/>
</dbReference>
<dbReference type="SUPFAM" id="SSF48726">
    <property type="entry name" value="Immunoglobulin"/>
    <property type="match status" value="12"/>
</dbReference>
<dbReference type="PROSITE" id="PS50835">
    <property type="entry name" value="IG_LIKE"/>
    <property type="match status" value="6"/>
</dbReference>
<accession>Q7TQA1</accession>
<accession>Q6ZQD0</accession>
<accession>Q7TQ99</accession>
<accession>Q7TQA0</accession>
<accession>Q8BMN5</accession>
<evidence type="ECO:0000250" key="1"/>
<evidence type="ECO:0000255" key="2"/>
<evidence type="ECO:0000255" key="3">
    <source>
        <dbReference type="PROSITE-ProRule" id="PRU00114"/>
    </source>
</evidence>
<evidence type="ECO:0000256" key="4">
    <source>
        <dbReference type="SAM" id="MobiDB-lite"/>
    </source>
</evidence>
<evidence type="ECO:0000269" key="5">
    <source>
    </source>
</evidence>
<evidence type="ECO:0000269" key="6">
    <source>
    </source>
</evidence>
<evidence type="ECO:0000303" key="7">
    <source>
    </source>
</evidence>
<evidence type="ECO:0000303" key="8">
    <source>
    </source>
</evidence>
<evidence type="ECO:0000303" key="9">
    <source>
    </source>
</evidence>
<evidence type="ECO:0000305" key="10"/>
<proteinExistence type="evidence at protein level"/>
<keyword id="KW-0877">Alternative promoter usage</keyword>
<keyword id="KW-0025">Alternative splicing</keyword>
<keyword id="KW-1015">Disulfide bond</keyword>
<keyword id="KW-0325">Glycoprotein</keyword>
<keyword id="KW-0393">Immunoglobulin domain</keyword>
<keyword id="KW-0472">Membrane</keyword>
<keyword id="KW-0675">Receptor</keyword>
<keyword id="KW-1185">Reference proteome</keyword>
<keyword id="KW-0677">Repeat</keyword>
<keyword id="KW-0964">Secreted</keyword>
<keyword id="KW-0732">Signal</keyword>
<keyword id="KW-0812">Transmembrane</keyword>
<keyword id="KW-1133">Transmembrane helix</keyword>
<name>IGSF1_MOUSE</name>
<gene>
    <name type="primary">Igsf1</name>
    <name type="synonym">Kiaa0364</name>
</gene>
<reference key="1">
    <citation type="journal article" date="2003" name="Mol. Cell. Biol.">
        <title>Normal reproductive function in InhBP/p120-deficient mice.</title>
        <authorList>
            <person name="Bernard D.J."/>
            <person name="Burns K.H."/>
            <person name="Haupt B."/>
            <person name="Matzuk M.M."/>
            <person name="Woodruff T.K."/>
        </authorList>
    </citation>
    <scope>NUCLEOTIDE SEQUENCE [MRNA] (ISOFORMS 1; 3; 4 AND 5)</scope>
    <scope>DISRUPTION PHENOTYPE</scope>
    <source>
        <tissue>Pituitary</tissue>
    </source>
</reference>
<reference key="2">
    <citation type="journal article" date="2003" name="DNA Res.">
        <title>Prediction of the coding sequences of mouse homologues of KIAA gene: III. The complete nucleotide sequences of 500 mouse KIAA-homologous cDNAs identified by screening of terminal sequences of cDNA clones randomly sampled from size-fractionated libraries.</title>
        <authorList>
            <person name="Okazaki N."/>
            <person name="Kikuno R."/>
            <person name="Ohara R."/>
            <person name="Inamoto S."/>
            <person name="Koseki H."/>
            <person name="Hiraoka S."/>
            <person name="Saga Y."/>
            <person name="Nagase T."/>
            <person name="Ohara O."/>
            <person name="Koga H."/>
        </authorList>
    </citation>
    <scope>NUCLEOTIDE SEQUENCE [LARGE SCALE MRNA] (ISOFORM 2)</scope>
</reference>
<reference key="3">
    <citation type="journal article" date="2005" name="Science">
        <title>The transcriptional landscape of the mammalian genome.</title>
        <authorList>
            <person name="Carninci P."/>
            <person name="Kasukawa T."/>
            <person name="Katayama S."/>
            <person name="Gough J."/>
            <person name="Frith M.C."/>
            <person name="Maeda N."/>
            <person name="Oyama R."/>
            <person name="Ravasi T."/>
            <person name="Lenhard B."/>
            <person name="Wells C."/>
            <person name="Kodzius R."/>
            <person name="Shimokawa K."/>
            <person name="Bajic V.B."/>
            <person name="Brenner S.E."/>
            <person name="Batalov S."/>
            <person name="Forrest A.R."/>
            <person name="Zavolan M."/>
            <person name="Davis M.J."/>
            <person name="Wilming L.G."/>
            <person name="Aidinis V."/>
            <person name="Allen J.E."/>
            <person name="Ambesi-Impiombato A."/>
            <person name="Apweiler R."/>
            <person name="Aturaliya R.N."/>
            <person name="Bailey T.L."/>
            <person name="Bansal M."/>
            <person name="Baxter L."/>
            <person name="Beisel K.W."/>
            <person name="Bersano T."/>
            <person name="Bono H."/>
            <person name="Chalk A.M."/>
            <person name="Chiu K.P."/>
            <person name="Choudhary V."/>
            <person name="Christoffels A."/>
            <person name="Clutterbuck D.R."/>
            <person name="Crowe M.L."/>
            <person name="Dalla E."/>
            <person name="Dalrymple B.P."/>
            <person name="de Bono B."/>
            <person name="Della Gatta G."/>
            <person name="di Bernardo D."/>
            <person name="Down T."/>
            <person name="Engstrom P."/>
            <person name="Fagiolini M."/>
            <person name="Faulkner G."/>
            <person name="Fletcher C.F."/>
            <person name="Fukushima T."/>
            <person name="Furuno M."/>
            <person name="Futaki S."/>
            <person name="Gariboldi M."/>
            <person name="Georgii-Hemming P."/>
            <person name="Gingeras T.R."/>
            <person name="Gojobori T."/>
            <person name="Green R.E."/>
            <person name="Gustincich S."/>
            <person name="Harbers M."/>
            <person name="Hayashi Y."/>
            <person name="Hensch T.K."/>
            <person name="Hirokawa N."/>
            <person name="Hill D."/>
            <person name="Huminiecki L."/>
            <person name="Iacono M."/>
            <person name="Ikeo K."/>
            <person name="Iwama A."/>
            <person name="Ishikawa T."/>
            <person name="Jakt M."/>
            <person name="Kanapin A."/>
            <person name="Katoh M."/>
            <person name="Kawasawa Y."/>
            <person name="Kelso J."/>
            <person name="Kitamura H."/>
            <person name="Kitano H."/>
            <person name="Kollias G."/>
            <person name="Krishnan S.P."/>
            <person name="Kruger A."/>
            <person name="Kummerfeld S.K."/>
            <person name="Kurochkin I.V."/>
            <person name="Lareau L.F."/>
            <person name="Lazarevic D."/>
            <person name="Lipovich L."/>
            <person name="Liu J."/>
            <person name="Liuni S."/>
            <person name="McWilliam S."/>
            <person name="Madan Babu M."/>
            <person name="Madera M."/>
            <person name="Marchionni L."/>
            <person name="Matsuda H."/>
            <person name="Matsuzawa S."/>
            <person name="Miki H."/>
            <person name="Mignone F."/>
            <person name="Miyake S."/>
            <person name="Morris K."/>
            <person name="Mottagui-Tabar S."/>
            <person name="Mulder N."/>
            <person name="Nakano N."/>
            <person name="Nakauchi H."/>
            <person name="Ng P."/>
            <person name="Nilsson R."/>
            <person name="Nishiguchi S."/>
            <person name="Nishikawa S."/>
            <person name="Nori F."/>
            <person name="Ohara O."/>
            <person name="Okazaki Y."/>
            <person name="Orlando V."/>
            <person name="Pang K.C."/>
            <person name="Pavan W.J."/>
            <person name="Pavesi G."/>
            <person name="Pesole G."/>
            <person name="Petrovsky N."/>
            <person name="Piazza S."/>
            <person name="Reed J."/>
            <person name="Reid J.F."/>
            <person name="Ring B.Z."/>
            <person name="Ringwald M."/>
            <person name="Rost B."/>
            <person name="Ruan Y."/>
            <person name="Salzberg S.L."/>
            <person name="Sandelin A."/>
            <person name="Schneider C."/>
            <person name="Schoenbach C."/>
            <person name="Sekiguchi K."/>
            <person name="Semple C.A."/>
            <person name="Seno S."/>
            <person name="Sessa L."/>
            <person name="Sheng Y."/>
            <person name="Shibata Y."/>
            <person name="Shimada H."/>
            <person name="Shimada K."/>
            <person name="Silva D."/>
            <person name="Sinclair B."/>
            <person name="Sperling S."/>
            <person name="Stupka E."/>
            <person name="Sugiura K."/>
            <person name="Sultana R."/>
            <person name="Takenaka Y."/>
            <person name="Taki K."/>
            <person name="Tammoja K."/>
            <person name="Tan S.L."/>
            <person name="Tang S."/>
            <person name="Taylor M.S."/>
            <person name="Tegner J."/>
            <person name="Teichmann S.A."/>
            <person name="Ueda H.R."/>
            <person name="van Nimwegen E."/>
            <person name="Verardo R."/>
            <person name="Wei C.L."/>
            <person name="Yagi K."/>
            <person name="Yamanishi H."/>
            <person name="Zabarovsky E."/>
            <person name="Zhu S."/>
            <person name="Zimmer A."/>
            <person name="Hide W."/>
            <person name="Bult C."/>
            <person name="Grimmond S.M."/>
            <person name="Teasdale R.D."/>
            <person name="Liu E.T."/>
            <person name="Brusic V."/>
            <person name="Quackenbush J."/>
            <person name="Wahlestedt C."/>
            <person name="Mattick J.S."/>
            <person name="Hume D.A."/>
            <person name="Kai C."/>
            <person name="Sasaki D."/>
            <person name="Tomaru Y."/>
            <person name="Fukuda S."/>
            <person name="Kanamori-Katayama M."/>
            <person name="Suzuki M."/>
            <person name="Aoki J."/>
            <person name="Arakawa T."/>
            <person name="Iida J."/>
            <person name="Imamura K."/>
            <person name="Itoh M."/>
            <person name="Kato T."/>
            <person name="Kawaji H."/>
            <person name="Kawagashira N."/>
            <person name="Kawashima T."/>
            <person name="Kojima M."/>
            <person name="Kondo S."/>
            <person name="Konno H."/>
            <person name="Nakano K."/>
            <person name="Ninomiya N."/>
            <person name="Nishio T."/>
            <person name="Okada M."/>
            <person name="Plessy C."/>
            <person name="Shibata K."/>
            <person name="Shiraki T."/>
            <person name="Suzuki S."/>
            <person name="Tagami M."/>
            <person name="Waki K."/>
            <person name="Watahiki A."/>
            <person name="Okamura-Oho Y."/>
            <person name="Suzuki H."/>
            <person name="Kawai J."/>
            <person name="Hayashizaki Y."/>
        </authorList>
    </citation>
    <scope>NUCLEOTIDE SEQUENCE [LARGE SCALE MRNA] (ISOFORM 4)</scope>
    <source>
        <strain>C57BL/6J</strain>
        <tissue>Pituitary</tissue>
    </source>
</reference>
<reference key="4">
    <citation type="journal article" date="2010" name="Cell">
        <title>A tissue-specific atlas of mouse protein phosphorylation and expression.</title>
        <authorList>
            <person name="Huttlin E.L."/>
            <person name="Jedrychowski M.P."/>
            <person name="Elias J.E."/>
            <person name="Goswami T."/>
            <person name="Rad R."/>
            <person name="Beausoleil S.A."/>
            <person name="Villen J."/>
            <person name="Haas W."/>
            <person name="Sowa M.E."/>
            <person name="Gygi S.P."/>
        </authorList>
    </citation>
    <scope>IDENTIFICATION BY MASS SPECTROMETRY [LARGE SCALE ANALYSIS]</scope>
    <source>
        <tissue>Brain</tissue>
    </source>
</reference>
<reference key="5">
    <citation type="journal article" date="2012" name="Nat. Genet.">
        <title>Loss-of-function mutations in IGSF1 cause an X-linked syndrome of central hypothyroidism and testicular enlargement.</title>
        <authorList>
            <person name="Sun Y."/>
            <person name="Bak B."/>
            <person name="Schoenmakers N."/>
            <person name="van Trotsenburg A.S."/>
            <person name="Oostdijk W."/>
            <person name="Voshol P."/>
            <person name="Cambridge E."/>
            <person name="White J.K."/>
            <person name="le Tissier P."/>
            <person name="Gharavy S.N."/>
            <person name="Martinez-Barbera J.P."/>
            <person name="Stokvis-Brantsma W.H."/>
            <person name="Vulsma T."/>
            <person name="Kempers M.J."/>
            <person name="Persani L."/>
            <person name="Campi I."/>
            <person name="Bonomi M."/>
            <person name="Beck-Peccoz P."/>
            <person name="Zhu H."/>
            <person name="Davis T.M."/>
            <person name="Hokken-Koelega A.C."/>
            <person name="Del Blanco D.G."/>
            <person name="Rangasami J.J."/>
            <person name="Ruivenkamp C.A."/>
            <person name="Laros J.F."/>
            <person name="Kriek M."/>
            <person name="Kant S.G."/>
            <person name="Bosch C.A."/>
            <person name="Biermasz N.R."/>
            <person name="Appelman-Dijkstra N.M."/>
            <person name="Corssmit E.P."/>
            <person name="Hovens G.C."/>
            <person name="Pereira A.M."/>
            <person name="den Dunnen J.T."/>
            <person name="Wade M.G."/>
            <person name="Breuning M.H."/>
            <person name="Hennekam R.C."/>
            <person name="Chatterjee K."/>
            <person name="Dattani M.T."/>
            <person name="Wit J.M."/>
            <person name="Bernard D.J."/>
        </authorList>
    </citation>
    <scope>DEVELOPMENTAL STAGE</scope>
    <scope>DISRUPTION PHENOTYPE</scope>
</reference>
<sequence length="1317" mass="147010">MMLRTFTLLLLCIWLNPGMTSLAVESQPELWIESNYPQAPWENITLWCKSPSRVSSKFLLLKDNSQMTWIRPPYKTFQVSFFIGALTESNTGLYRCCYWKEKGWSKPSKILELEAPGQLPKPIFWIQAETPPLPGCNVNIFCHGWLQDLVFMLFKEGYTEPVDYQVPTGTMAIFSIDNLAPENEGVYICRTHIQMLPTLWSEPSNPLKLVVAGLYPKPTLTAHPGPILAPGESLSLRCQGPIYGMTFALMRLEDLKKSFYHKKPIKNEAYFYFQDLKIQDTGHYLCFYYDGSYRGSLLSDILKIWVTDTFPKTWLLVQPSPVIQMGQNVSLRCGGLMDGVGLALYKKGEEKPLQFLDASSNTGNNSFFLKNVTYRDAGIYSCHYYLTWKTSIKMATYNTVELMVVAWPSSVFKVGKTITLQCRVSHPVLEFSLEWEERTTFQKFSVDGDFLITDIEGQGTGTYSCSYRIEAHPNTWSHRSKPLKLVGPAGFLTWNSILNEAVRVSLTMQLASLLLLVVWIRWKCRRLRLREAWLLGTAQGVAMLFILMALLCCGLCNGALTEEIEIVMPTPKPELWAETNFPLAPWKNLTLWCRSPSGSTKEFVLLKDGTGWIATRPASEQVRAAFPLGALTHSHTGSYHCHSWEEMAVSEPSEALELVGTDILPKPVISASLPIRGQELQIRCKGWLEGLGFALYKKGEQEPVQQLGAVGREAFFTIQRMEDKDEGNYSCRTHTEMQPFKWSEPSEPLELVIKEMYPKPFFKTWASPVVTPGSRVTFNCSTSHEHMSFILYKDGNEIASSDLAWGNPGGSTAHFLIISVGIGDGGNYSCRYYDFSIWSEPSNPVELVVTEFYPKPTLLAQPGPVVLPGKNVTLRCQGIFQGMRFALLQEGTHTPLQFQSTSGTSADFLLHTVGAQDFGNYSCVYYETTMSNRGSSLSTPLMIWVTDTFPRPWLSAEPSSVVTMGQNVTLWCQGPVRGVGYILHKEGEATSMQLWGSTSNEGAFPIINISGASIGRYSCCYHPDWMSPIKIQPSNTLELIVTGLLPKPSLLVQPGPMVAPGENVTLQCQGELPDSTFVLLKEGTRQPLEQQRPSGYRADFWMPVVRDQDSGVYSCVYYLDSAPLVASNHSNSLEIWVTDKPPKPSLSAWPSTIFKLGKDITLQCRGPLPGVEFVLEHDGEEAPQQFSEDGDFVIDNLEGKGIGNYSCSYRLQAYPDIWSEPSDTLELVGAAGPVAQECTVGNIVRSTLIVVVVVALGIVLAVEWKKWPRLRTRGSETDGRDQTVVLEECNQEGEPGTTTNSPSSASQEVSVELTVPI</sequence>
<comment type="function">
    <text evidence="1">Seems to be a coreceptor in inhibin signaling, but seems not to be a high-affinity inhibin receptor. Antagonizes activin A signaling in the presence or absence of inhibin B. Necessary to mediate a specific antagonistic effect of inhibin B on activin-stimulated transcription (By similarity).</text>
</comment>
<comment type="subunit">
    <text evidence="1">Interacts with INHA; the interaction is not confirmed by standard receptor binding assays (By similarity). Interacts with ACVR1B; the interaction appears to be ligand-dependent as it is diminished by inhibin B and activin A. Interacts with ACVR2A, ACVR2B, ACVRL1 and BMPR1B (By similarity). Interacts with HECTD1 (By similarity).</text>
</comment>
<comment type="subcellular location">
    <molecule>Isoform 1</molecule>
    <subcellularLocation>
        <location evidence="10">Membrane</location>
        <topology evidence="10">Multi-pass membrane protein</topology>
    </subcellularLocation>
</comment>
<comment type="subcellular location">
    <molecule>Isoform 2</molecule>
    <subcellularLocation>
        <location evidence="10">Membrane</location>
        <topology evidence="10">Multi-pass membrane protein</topology>
    </subcellularLocation>
</comment>
<comment type="subcellular location">
    <molecule>Isoform 3</molecule>
    <subcellularLocation>
        <location evidence="10">Membrane</location>
        <topology evidence="10">Multi-pass membrane protein</topology>
    </subcellularLocation>
</comment>
<comment type="subcellular location">
    <molecule>Isoform 4</molecule>
    <subcellularLocation>
        <location evidence="10">Secreted</location>
    </subcellularLocation>
</comment>
<comment type="subcellular location">
    <molecule>Isoform 5</molecule>
    <subcellularLocation>
        <location evidence="10">Secreted</location>
    </subcellularLocation>
</comment>
<comment type="alternative products">
    <event type="alternative promoter"/>
    <event type="alternative splicing"/>
    <isoform>
        <id>Q7TQA1-1</id>
        <name>1</name>
        <name>InhBP-L</name>
        <name>long</name>
        <sequence type="displayed"/>
    </isoform>
    <isoform>
        <id>Q7TQA1-2</id>
        <name>2</name>
        <sequence type="described" ref="VSP_031203"/>
    </isoform>
    <isoform>
        <id>Q7TQA1-3</id>
        <name>3</name>
        <name>InhBP-3</name>
        <sequence type="described" ref="VSP_031201 VSP_031202"/>
    </isoform>
    <isoform>
        <id>Q7TQA1-4</id>
        <name>4</name>
        <name>InhBP-S</name>
        <name>short</name>
        <sequence type="described" ref="VSP_031199 VSP_031200"/>
    </isoform>
    <isoform>
        <id>Q7TQA1-5</id>
        <name>5</name>
        <name>InhBP-4</name>
        <name>variant 4</name>
        <sequence type="described" ref="VSP_031198"/>
    </isoform>
</comment>
<comment type="developmental stage">
    <text evidence="6">Expressed at embryonic day (E) 12.5 in embryo.</text>
</comment>
<comment type="disruption phenotype">
    <text evidence="5 6">Mice are viable and fertile and show no alterations in FSH synthesis or secretion or in ovarian and testicular function. According to PubMed:23143598 male mice show diminished pituitary and serum thyroid-stimulating hormone (TSH) concentrations, reduced pituitary thyrotropin-releasing hormone (TRH) receptor expression, decreased triiodothyronine concentrations and increased body mass.</text>
</comment>
<comment type="miscellaneous">
    <molecule>Isoform 1</molecule>
    <text>Produced by alternative promoter usage.</text>
</comment>
<comment type="miscellaneous">
    <molecule>Isoform 2</molecule>
    <text evidence="10">Produced by alternative splicing of isoform 1.</text>
</comment>
<comment type="miscellaneous">
    <molecule>Isoform 3</molecule>
    <text evidence="10">Produced by alternative splicing of isoform 1.</text>
</comment>
<comment type="miscellaneous">
    <molecule>Isoform 4</molecule>
    <text evidence="10">Produced by alternative splicing of isoform 1.</text>
</comment>
<comment type="miscellaneous">
    <molecule>Isoform 5</molecule>
    <text evidence="10">Produced by alternative promoter usage.</text>
</comment>
<comment type="caution">
    <text evidence="10">It is uncertain whether Met-1 or Met-2 is the initiator.</text>
</comment>
<comment type="sequence caution" evidence="10">
    <conflict type="erroneous initiation">
        <sequence resource="EMBL-CDS" id="BAC97936"/>
    </conflict>
    <text>Extended N-terminus.</text>
</comment>
<organism>
    <name type="scientific">Mus musculus</name>
    <name type="common">Mouse</name>
    <dbReference type="NCBI Taxonomy" id="10090"/>
    <lineage>
        <taxon>Eukaryota</taxon>
        <taxon>Metazoa</taxon>
        <taxon>Chordata</taxon>
        <taxon>Craniata</taxon>
        <taxon>Vertebrata</taxon>
        <taxon>Euteleostomi</taxon>
        <taxon>Mammalia</taxon>
        <taxon>Eutheria</taxon>
        <taxon>Euarchontoglires</taxon>
        <taxon>Glires</taxon>
        <taxon>Rodentia</taxon>
        <taxon>Myomorpha</taxon>
        <taxon>Muroidea</taxon>
        <taxon>Muridae</taxon>
        <taxon>Murinae</taxon>
        <taxon>Mus</taxon>
        <taxon>Mus</taxon>
    </lineage>
</organism>
<protein>
    <recommendedName>
        <fullName>Immunoglobulin superfamily member 1</fullName>
        <shortName>IgSF1</shortName>
    </recommendedName>
    <alternativeName>
        <fullName>Inhibin-binding protein</fullName>
        <shortName>InhBP</shortName>
    </alternativeName>
</protein>